<organism>
    <name type="scientific">Stutzerimonas stutzeri (strain A1501)</name>
    <name type="common">Pseudomonas stutzeri</name>
    <dbReference type="NCBI Taxonomy" id="379731"/>
    <lineage>
        <taxon>Bacteria</taxon>
        <taxon>Pseudomonadati</taxon>
        <taxon>Pseudomonadota</taxon>
        <taxon>Gammaproteobacteria</taxon>
        <taxon>Pseudomonadales</taxon>
        <taxon>Pseudomonadaceae</taxon>
        <taxon>Stutzerimonas</taxon>
    </lineage>
</organism>
<comment type="function">
    <text evidence="1">Involved in the formation of 2-(5''-phosphoribosyl)-3'-dephosphocoenzyme-A, the prosthetic group of the acyl-carrier protein of the malonate decarboxylase.</text>
</comment>
<comment type="catalytic activity">
    <reaction evidence="1">
        <text>3'-dephospho-CoA + ATP = 2'-(5''-triphospho-alpha-D-ribosyl)-3'-dephospho-CoA + adenine</text>
        <dbReference type="Rhea" id="RHEA:15117"/>
        <dbReference type="ChEBI" id="CHEBI:16708"/>
        <dbReference type="ChEBI" id="CHEBI:30616"/>
        <dbReference type="ChEBI" id="CHEBI:57328"/>
        <dbReference type="ChEBI" id="CHEBI:61378"/>
        <dbReference type="EC" id="2.4.2.52"/>
    </reaction>
</comment>
<comment type="similarity">
    <text evidence="1">Belongs to the CitG/MdcB family.</text>
</comment>
<evidence type="ECO:0000255" key="1">
    <source>
        <dbReference type="HAMAP-Rule" id="MF_01883"/>
    </source>
</evidence>
<dbReference type="EC" id="2.4.2.52" evidence="1"/>
<dbReference type="EMBL" id="CP000304">
    <property type="protein sequence ID" value="ABP81741.1"/>
    <property type="molecule type" value="Genomic_DNA"/>
</dbReference>
<dbReference type="RefSeq" id="WP_011915120.1">
    <property type="nucleotide sequence ID" value="NC_009434.1"/>
</dbReference>
<dbReference type="KEGG" id="psa:PST_4119"/>
<dbReference type="eggNOG" id="COG1767">
    <property type="taxonomic scope" value="Bacteria"/>
</dbReference>
<dbReference type="HOGENOM" id="CLU_056179_0_0_6"/>
<dbReference type="Proteomes" id="UP000000233">
    <property type="component" value="Chromosome"/>
</dbReference>
<dbReference type="GO" id="GO:0005524">
    <property type="term" value="F:ATP binding"/>
    <property type="evidence" value="ECO:0007669"/>
    <property type="project" value="UniProtKB-KW"/>
</dbReference>
<dbReference type="GO" id="GO:0046917">
    <property type="term" value="F:triphosphoribosyl-dephospho-CoA synthase activity"/>
    <property type="evidence" value="ECO:0007669"/>
    <property type="project" value="UniProtKB-UniRule"/>
</dbReference>
<dbReference type="GO" id="GO:0051191">
    <property type="term" value="P:prosthetic group biosynthetic process"/>
    <property type="evidence" value="ECO:0007669"/>
    <property type="project" value="TreeGrafter"/>
</dbReference>
<dbReference type="Gene3D" id="1.10.4200.10">
    <property type="entry name" value="Triphosphoribosyl-dephospho-CoA protein"/>
    <property type="match status" value="2"/>
</dbReference>
<dbReference type="HAMAP" id="MF_01883">
    <property type="entry name" value="MdcB"/>
    <property type="match status" value="1"/>
</dbReference>
<dbReference type="InterPro" id="IPR002736">
    <property type="entry name" value="CitG"/>
</dbReference>
<dbReference type="InterPro" id="IPR017555">
    <property type="entry name" value="TriPribosyl-deP-CoA_syn"/>
</dbReference>
<dbReference type="NCBIfam" id="TIGR03132">
    <property type="entry name" value="malonate_mdcB"/>
    <property type="match status" value="1"/>
</dbReference>
<dbReference type="NCBIfam" id="NF002315">
    <property type="entry name" value="PRK01237.1"/>
    <property type="match status" value="1"/>
</dbReference>
<dbReference type="PANTHER" id="PTHR30201:SF2">
    <property type="entry name" value="2-(5''-TRIPHOSPHORIBOSYL)-3'-DEPHOSPHOCOENZYME-A SYNTHASE"/>
    <property type="match status" value="1"/>
</dbReference>
<dbReference type="PANTHER" id="PTHR30201">
    <property type="entry name" value="TRIPHOSPHORIBOSYL-DEPHOSPHO-COA SYNTHASE"/>
    <property type="match status" value="1"/>
</dbReference>
<dbReference type="Pfam" id="PF01874">
    <property type="entry name" value="CitG"/>
    <property type="match status" value="1"/>
</dbReference>
<name>MDCB_STUS1</name>
<protein>
    <recommendedName>
        <fullName evidence="1">Probable 2-(5''-triphosphoribosyl)-3'-dephosphocoenzyme-A synthase</fullName>
        <shortName evidence="1">2-(5''-triphosphoribosyl)-3'-dephospho-CoA synthase</shortName>
        <ecNumber evidence="1">2.4.2.52</ecNumber>
    </recommendedName>
</protein>
<keyword id="KW-0067">ATP-binding</keyword>
<keyword id="KW-0547">Nucleotide-binding</keyword>
<keyword id="KW-1185">Reference proteome</keyword>
<keyword id="KW-0808">Transferase</keyword>
<sequence>MSALIARQAPSAAERLADLAVQALVDEADLSPKPGLVDRRGSGAHSDLHLGLMHASAQSLWPAFAAMADAARSEGRVSQALRETLGQLGRDGEAEMLRVTAGVNTHRGAIWALGLLSAAAMLESGASAGGIAASAAALARLDDPAAPHNPDSHGARVCRRYGVLGAREQAQHGFPAVIEHGLPQLLASRRAGAGEQNARLDALLAIMSSLTDTCVLHRAGLEGLTRMQAGARAVLEAGGCASLAGRRRLRALEGEMLSLRASPGGAADLLAATLFLDRLTPAASAPIGSY</sequence>
<accession>A4VRZ0</accession>
<reference key="1">
    <citation type="journal article" date="2008" name="Proc. Natl. Acad. Sci. U.S.A.">
        <title>Nitrogen fixation island and rhizosphere competence traits in the genome of root-associated Pseudomonas stutzeri A1501.</title>
        <authorList>
            <person name="Yan Y."/>
            <person name="Yang J."/>
            <person name="Dou Y."/>
            <person name="Chen M."/>
            <person name="Ping S."/>
            <person name="Peng J."/>
            <person name="Lu W."/>
            <person name="Zhang W."/>
            <person name="Yao Z."/>
            <person name="Li H."/>
            <person name="Liu W."/>
            <person name="He S."/>
            <person name="Geng L."/>
            <person name="Zhang X."/>
            <person name="Yang F."/>
            <person name="Yu H."/>
            <person name="Zhan Y."/>
            <person name="Li D."/>
            <person name="Lin Z."/>
            <person name="Wang Y."/>
            <person name="Elmerich C."/>
            <person name="Lin M."/>
            <person name="Jin Q."/>
        </authorList>
    </citation>
    <scope>NUCLEOTIDE SEQUENCE [LARGE SCALE GENOMIC DNA]</scope>
    <source>
        <strain>A1501</strain>
    </source>
</reference>
<proteinExistence type="inferred from homology"/>
<feature type="chain" id="PRO_1000189589" description="Probable 2-(5''-triphosphoribosyl)-3'-dephosphocoenzyme-A synthase">
    <location>
        <begin position="1"/>
        <end position="290"/>
    </location>
</feature>
<gene>
    <name evidence="1" type="primary">mdcB</name>
    <name type="ordered locus">PST_4119</name>
</gene>